<organism>
    <name type="scientific">Xanthomonas campestris pv. campestris (strain B100)</name>
    <dbReference type="NCBI Taxonomy" id="509169"/>
    <lineage>
        <taxon>Bacteria</taxon>
        <taxon>Pseudomonadati</taxon>
        <taxon>Pseudomonadota</taxon>
        <taxon>Gammaproteobacteria</taxon>
        <taxon>Lysobacterales</taxon>
        <taxon>Lysobacteraceae</taxon>
        <taxon>Xanthomonas</taxon>
    </lineage>
</organism>
<evidence type="ECO:0000255" key="1">
    <source>
        <dbReference type="HAMAP-Rule" id="MF_00222"/>
    </source>
</evidence>
<reference key="1">
    <citation type="journal article" date="2008" name="J. Biotechnol.">
        <title>The genome of Xanthomonas campestris pv. campestris B100 and its use for the reconstruction of metabolic pathways involved in xanthan biosynthesis.</title>
        <authorList>
            <person name="Vorhoelter F.-J."/>
            <person name="Schneiker S."/>
            <person name="Goesmann A."/>
            <person name="Krause L."/>
            <person name="Bekel T."/>
            <person name="Kaiser O."/>
            <person name="Linke B."/>
            <person name="Patschkowski T."/>
            <person name="Rueckert C."/>
            <person name="Schmid J."/>
            <person name="Sidhu V.K."/>
            <person name="Sieber V."/>
            <person name="Tauch A."/>
            <person name="Watt S.A."/>
            <person name="Weisshaar B."/>
            <person name="Becker A."/>
            <person name="Niehaus K."/>
            <person name="Puehler A."/>
        </authorList>
    </citation>
    <scope>NUCLEOTIDE SEQUENCE [LARGE SCALE GENOMIC DNA]</scope>
    <source>
        <strain>B100</strain>
    </source>
</reference>
<feature type="chain" id="PRO_1000100152" description="Shikimate dehydrogenase (NADP(+))">
    <location>
        <begin position="1"/>
        <end position="283"/>
    </location>
</feature>
<feature type="active site" description="Proton acceptor" evidence="1">
    <location>
        <position position="67"/>
    </location>
</feature>
<feature type="binding site" evidence="1">
    <location>
        <begin position="16"/>
        <end position="18"/>
    </location>
    <ligand>
        <name>shikimate</name>
        <dbReference type="ChEBI" id="CHEBI:36208"/>
    </ligand>
</feature>
<feature type="binding site" evidence="1">
    <location>
        <position position="63"/>
    </location>
    <ligand>
        <name>shikimate</name>
        <dbReference type="ChEBI" id="CHEBI:36208"/>
    </ligand>
</feature>
<feature type="binding site" evidence="1">
    <location>
        <position position="79"/>
    </location>
    <ligand>
        <name>NADP(+)</name>
        <dbReference type="ChEBI" id="CHEBI:58349"/>
    </ligand>
</feature>
<feature type="binding site" evidence="1">
    <location>
        <position position="88"/>
    </location>
    <ligand>
        <name>shikimate</name>
        <dbReference type="ChEBI" id="CHEBI:36208"/>
    </ligand>
</feature>
<feature type="binding site" evidence="1">
    <location>
        <position position="103"/>
    </location>
    <ligand>
        <name>shikimate</name>
        <dbReference type="ChEBI" id="CHEBI:36208"/>
    </ligand>
</feature>
<feature type="binding site" evidence="1">
    <location>
        <begin position="128"/>
        <end position="132"/>
    </location>
    <ligand>
        <name>NADP(+)</name>
        <dbReference type="ChEBI" id="CHEBI:58349"/>
    </ligand>
</feature>
<feature type="binding site" evidence="1">
    <location>
        <position position="223"/>
    </location>
    <ligand>
        <name>NADP(+)</name>
        <dbReference type="ChEBI" id="CHEBI:58349"/>
    </ligand>
</feature>
<feature type="binding site" evidence="1">
    <location>
        <position position="243"/>
    </location>
    <ligand>
        <name>NADP(+)</name>
        <dbReference type="ChEBI" id="CHEBI:58349"/>
    </ligand>
</feature>
<protein>
    <recommendedName>
        <fullName evidence="1">Shikimate dehydrogenase (NADP(+))</fullName>
        <shortName evidence="1">SDH</shortName>
        <ecNumber evidence="1">1.1.1.25</ecNumber>
    </recommendedName>
</protein>
<sequence length="283" mass="29687">MPVSRYAVFGHPVAHSLSPAIHADFGKQTGIALDYTAIDAAPEEFTAALERFAADGGKGANVTLPLKEAAFALSASPSDRARVAGAVNTLVRNDGQWQGDNTDGAGLVRDLTERHGLDLRGRRVLLLGAGGAARGVAPALLEAGITEMVVVNRSPERADALCDALGEPGRVVSRYLEDLRELGDFELIVNATAAGRDRDAGAFALPLGLVNSLTAAVDLNYGATAIAFLAWARSAQCRYAIDGLGMLVEQAAESFALWHGVRPQTDPVYDALRARDAVLVSAD</sequence>
<proteinExistence type="inferred from homology"/>
<keyword id="KW-0028">Amino-acid biosynthesis</keyword>
<keyword id="KW-0057">Aromatic amino acid biosynthesis</keyword>
<keyword id="KW-0521">NADP</keyword>
<keyword id="KW-0560">Oxidoreductase</keyword>
<gene>
    <name evidence="1" type="primary">aroE</name>
    <name type="ordered locus">xcc-b100_4141</name>
</gene>
<name>AROE_XANCB</name>
<accession>B0RXX4</accession>
<comment type="function">
    <text evidence="1">Involved in the biosynthesis of the chorismate, which leads to the biosynthesis of aromatic amino acids. Catalyzes the reversible NADPH linked reduction of 3-dehydroshikimate (DHSA) to yield shikimate (SA).</text>
</comment>
<comment type="catalytic activity">
    <reaction evidence="1">
        <text>shikimate + NADP(+) = 3-dehydroshikimate + NADPH + H(+)</text>
        <dbReference type="Rhea" id="RHEA:17737"/>
        <dbReference type="ChEBI" id="CHEBI:15378"/>
        <dbReference type="ChEBI" id="CHEBI:16630"/>
        <dbReference type="ChEBI" id="CHEBI:36208"/>
        <dbReference type="ChEBI" id="CHEBI:57783"/>
        <dbReference type="ChEBI" id="CHEBI:58349"/>
        <dbReference type="EC" id="1.1.1.25"/>
    </reaction>
</comment>
<comment type="pathway">
    <text evidence="1">Metabolic intermediate biosynthesis; chorismate biosynthesis; chorismate from D-erythrose 4-phosphate and phosphoenolpyruvate: step 4/7.</text>
</comment>
<comment type="subunit">
    <text evidence="1">Homodimer.</text>
</comment>
<comment type="similarity">
    <text evidence="1">Belongs to the shikimate dehydrogenase family.</text>
</comment>
<dbReference type="EC" id="1.1.1.25" evidence="1"/>
<dbReference type="EMBL" id="AM920689">
    <property type="protein sequence ID" value="CAP53510.1"/>
    <property type="molecule type" value="Genomic_DNA"/>
</dbReference>
<dbReference type="SMR" id="B0RXX4"/>
<dbReference type="KEGG" id="xca:xcc-b100_4141"/>
<dbReference type="HOGENOM" id="CLU_044063_2_1_6"/>
<dbReference type="UniPathway" id="UPA00053">
    <property type="reaction ID" value="UER00087"/>
</dbReference>
<dbReference type="Proteomes" id="UP000001188">
    <property type="component" value="Chromosome"/>
</dbReference>
<dbReference type="GO" id="GO:0005829">
    <property type="term" value="C:cytosol"/>
    <property type="evidence" value="ECO:0007669"/>
    <property type="project" value="TreeGrafter"/>
</dbReference>
<dbReference type="GO" id="GO:0050661">
    <property type="term" value="F:NADP binding"/>
    <property type="evidence" value="ECO:0007669"/>
    <property type="project" value="InterPro"/>
</dbReference>
<dbReference type="GO" id="GO:0004764">
    <property type="term" value="F:shikimate 3-dehydrogenase (NADP+) activity"/>
    <property type="evidence" value="ECO:0007669"/>
    <property type="project" value="UniProtKB-UniRule"/>
</dbReference>
<dbReference type="GO" id="GO:0008652">
    <property type="term" value="P:amino acid biosynthetic process"/>
    <property type="evidence" value="ECO:0007669"/>
    <property type="project" value="UniProtKB-KW"/>
</dbReference>
<dbReference type="GO" id="GO:0009073">
    <property type="term" value="P:aromatic amino acid family biosynthetic process"/>
    <property type="evidence" value="ECO:0007669"/>
    <property type="project" value="UniProtKB-KW"/>
</dbReference>
<dbReference type="GO" id="GO:0009423">
    <property type="term" value="P:chorismate biosynthetic process"/>
    <property type="evidence" value="ECO:0007669"/>
    <property type="project" value="UniProtKB-UniRule"/>
</dbReference>
<dbReference type="GO" id="GO:0019632">
    <property type="term" value="P:shikimate metabolic process"/>
    <property type="evidence" value="ECO:0007669"/>
    <property type="project" value="InterPro"/>
</dbReference>
<dbReference type="CDD" id="cd01065">
    <property type="entry name" value="NAD_bind_Shikimate_DH"/>
    <property type="match status" value="1"/>
</dbReference>
<dbReference type="FunFam" id="3.40.50.10860:FF:000006">
    <property type="entry name" value="Shikimate dehydrogenase (NADP(+))"/>
    <property type="match status" value="1"/>
</dbReference>
<dbReference type="Gene3D" id="3.40.50.10860">
    <property type="entry name" value="Leucine Dehydrogenase, chain A, domain 1"/>
    <property type="match status" value="1"/>
</dbReference>
<dbReference type="Gene3D" id="3.40.50.720">
    <property type="entry name" value="NAD(P)-binding Rossmann-like Domain"/>
    <property type="match status" value="1"/>
</dbReference>
<dbReference type="HAMAP" id="MF_00222">
    <property type="entry name" value="Shikimate_DH_AroE"/>
    <property type="match status" value="1"/>
</dbReference>
<dbReference type="InterPro" id="IPR046346">
    <property type="entry name" value="Aminoacid_DH-like_N_sf"/>
</dbReference>
<dbReference type="InterPro" id="IPR036291">
    <property type="entry name" value="NAD(P)-bd_dom_sf"/>
</dbReference>
<dbReference type="InterPro" id="IPR041121">
    <property type="entry name" value="SDH_C"/>
</dbReference>
<dbReference type="InterPro" id="IPR011342">
    <property type="entry name" value="Shikimate_DH"/>
</dbReference>
<dbReference type="InterPro" id="IPR013708">
    <property type="entry name" value="Shikimate_DH-bd_N"/>
</dbReference>
<dbReference type="InterPro" id="IPR022893">
    <property type="entry name" value="Shikimate_DH_fam"/>
</dbReference>
<dbReference type="InterPro" id="IPR006151">
    <property type="entry name" value="Shikm_DH/Glu-tRNA_Rdtase"/>
</dbReference>
<dbReference type="NCBIfam" id="TIGR00507">
    <property type="entry name" value="aroE"/>
    <property type="match status" value="1"/>
</dbReference>
<dbReference type="NCBIfam" id="NF001310">
    <property type="entry name" value="PRK00258.1-2"/>
    <property type="match status" value="1"/>
</dbReference>
<dbReference type="PANTHER" id="PTHR21089:SF1">
    <property type="entry name" value="BIFUNCTIONAL 3-DEHYDROQUINATE DEHYDRATASE_SHIKIMATE DEHYDROGENASE, CHLOROPLASTIC"/>
    <property type="match status" value="1"/>
</dbReference>
<dbReference type="PANTHER" id="PTHR21089">
    <property type="entry name" value="SHIKIMATE DEHYDROGENASE"/>
    <property type="match status" value="1"/>
</dbReference>
<dbReference type="Pfam" id="PF18317">
    <property type="entry name" value="SDH_C"/>
    <property type="match status" value="1"/>
</dbReference>
<dbReference type="Pfam" id="PF01488">
    <property type="entry name" value="Shikimate_DH"/>
    <property type="match status" value="1"/>
</dbReference>
<dbReference type="Pfam" id="PF08501">
    <property type="entry name" value="Shikimate_dh_N"/>
    <property type="match status" value="1"/>
</dbReference>
<dbReference type="SUPFAM" id="SSF53223">
    <property type="entry name" value="Aminoacid dehydrogenase-like, N-terminal domain"/>
    <property type="match status" value="1"/>
</dbReference>
<dbReference type="SUPFAM" id="SSF51735">
    <property type="entry name" value="NAD(P)-binding Rossmann-fold domains"/>
    <property type="match status" value="1"/>
</dbReference>